<proteinExistence type="inferred from homology"/>
<evidence type="ECO:0000255" key="1">
    <source>
        <dbReference type="HAMAP-Rule" id="MF_01589"/>
    </source>
</evidence>
<comment type="function">
    <text evidence="1">Catalyzes the conversion of S-adenosyl-L-methionine (SAM) to carboxy-S-adenosyl-L-methionine (Cx-SAM).</text>
</comment>
<comment type="catalytic activity">
    <reaction evidence="1">
        <text>prephenate + S-adenosyl-L-methionine = carboxy-S-adenosyl-L-methionine + 3-phenylpyruvate + H2O</text>
        <dbReference type="Rhea" id="RHEA:51692"/>
        <dbReference type="ChEBI" id="CHEBI:15377"/>
        <dbReference type="ChEBI" id="CHEBI:18005"/>
        <dbReference type="ChEBI" id="CHEBI:29934"/>
        <dbReference type="ChEBI" id="CHEBI:59789"/>
        <dbReference type="ChEBI" id="CHEBI:134278"/>
    </reaction>
</comment>
<comment type="subunit">
    <text evidence="1">Homodimer.</text>
</comment>
<comment type="similarity">
    <text evidence="1">Belongs to the class I-like SAM-binding methyltransferase superfamily. Cx-SAM synthase family.</text>
</comment>
<organism>
    <name type="scientific">Shigella boydii serotype 4 (strain Sb227)</name>
    <dbReference type="NCBI Taxonomy" id="300268"/>
    <lineage>
        <taxon>Bacteria</taxon>
        <taxon>Pseudomonadati</taxon>
        <taxon>Pseudomonadota</taxon>
        <taxon>Gammaproteobacteria</taxon>
        <taxon>Enterobacterales</taxon>
        <taxon>Enterobacteriaceae</taxon>
        <taxon>Shigella</taxon>
    </lineage>
</organism>
<sequence length="247" mass="27821">MSHRDTLFSAPIARLGDWTFDERVAEVFPDMIQRSVPGYSNIISMISMLAERFVQPGTQVYDLGCSLGAATLSVRRNIHHDNCKIIAIDNSPAMIERCRRHIDAYKAPTPVDVIEGDIRDIAIENASMVVLNFTLQFLEPSERQALLDKIYQGLNPGGALVLSEKFSFEDAKVGELLFNMHHDFKRANGYSELEISQKRSMLENVMLTDSVETHKARLHKAGFEHSELWFQCFNFGSLVALKAEDAA</sequence>
<name>CMOA_SHIBS</name>
<feature type="chain" id="PRO_0000314387" description="Carboxy-S-adenosyl-L-methionine synthase">
    <location>
        <begin position="1"/>
        <end position="247"/>
    </location>
</feature>
<feature type="binding site" evidence="1">
    <location>
        <position position="39"/>
    </location>
    <ligand>
        <name>S-adenosyl-L-methionine</name>
        <dbReference type="ChEBI" id="CHEBI:59789"/>
    </ligand>
</feature>
<feature type="binding site" evidence="1">
    <location>
        <begin position="64"/>
        <end position="66"/>
    </location>
    <ligand>
        <name>S-adenosyl-L-methionine</name>
        <dbReference type="ChEBI" id="CHEBI:59789"/>
    </ligand>
</feature>
<feature type="binding site" evidence="1">
    <location>
        <begin position="89"/>
        <end position="90"/>
    </location>
    <ligand>
        <name>S-adenosyl-L-methionine</name>
        <dbReference type="ChEBI" id="CHEBI:59789"/>
    </ligand>
</feature>
<feature type="binding site" evidence="1">
    <location>
        <begin position="117"/>
        <end position="118"/>
    </location>
    <ligand>
        <name>S-adenosyl-L-methionine</name>
        <dbReference type="ChEBI" id="CHEBI:59789"/>
    </ligand>
</feature>
<feature type="binding site" evidence="1">
    <location>
        <position position="132"/>
    </location>
    <ligand>
        <name>S-adenosyl-L-methionine</name>
        <dbReference type="ChEBI" id="CHEBI:59789"/>
    </ligand>
</feature>
<feature type="binding site" evidence="1">
    <location>
        <position position="199"/>
    </location>
    <ligand>
        <name>S-adenosyl-L-methionine</name>
        <dbReference type="ChEBI" id="CHEBI:59789"/>
    </ligand>
</feature>
<dbReference type="EC" id="2.1.3.-" evidence="1"/>
<dbReference type="EMBL" id="CP000036">
    <property type="protein sequence ID" value="ABB65769.1"/>
    <property type="molecule type" value="Genomic_DNA"/>
</dbReference>
<dbReference type="RefSeq" id="WP_000019618.1">
    <property type="nucleotide sequence ID" value="NC_007613.1"/>
</dbReference>
<dbReference type="SMR" id="Q322I9"/>
<dbReference type="KEGG" id="sbo:SBO_1132"/>
<dbReference type="HOGENOM" id="CLU_078475_0_0_6"/>
<dbReference type="Proteomes" id="UP000007067">
    <property type="component" value="Chromosome"/>
</dbReference>
<dbReference type="GO" id="GO:0016743">
    <property type="term" value="F:carboxyl- or carbamoyltransferase activity"/>
    <property type="evidence" value="ECO:0007669"/>
    <property type="project" value="UniProtKB-UniRule"/>
</dbReference>
<dbReference type="GO" id="GO:1904047">
    <property type="term" value="F:S-adenosyl-L-methionine binding"/>
    <property type="evidence" value="ECO:0007669"/>
    <property type="project" value="UniProtKB-UniRule"/>
</dbReference>
<dbReference type="GO" id="GO:0002098">
    <property type="term" value="P:tRNA wobble uridine modification"/>
    <property type="evidence" value="ECO:0007669"/>
    <property type="project" value="InterPro"/>
</dbReference>
<dbReference type="CDD" id="cd02440">
    <property type="entry name" value="AdoMet_MTases"/>
    <property type="match status" value="1"/>
</dbReference>
<dbReference type="FunFam" id="3.40.50.150:FF:000030">
    <property type="entry name" value="Carboxy-S-adenosyl-L-methionine synthase"/>
    <property type="match status" value="1"/>
</dbReference>
<dbReference type="Gene3D" id="3.40.50.150">
    <property type="entry name" value="Vaccinia Virus protein VP39"/>
    <property type="match status" value="1"/>
</dbReference>
<dbReference type="HAMAP" id="MF_01589">
    <property type="entry name" value="Cx_SAM_synthase"/>
    <property type="match status" value="1"/>
</dbReference>
<dbReference type="InterPro" id="IPR005271">
    <property type="entry name" value="CmoA"/>
</dbReference>
<dbReference type="InterPro" id="IPR041698">
    <property type="entry name" value="Methyltransf_25"/>
</dbReference>
<dbReference type="InterPro" id="IPR029063">
    <property type="entry name" value="SAM-dependent_MTases_sf"/>
</dbReference>
<dbReference type="NCBIfam" id="TIGR00740">
    <property type="entry name" value="carboxy-S-adenosyl-L-methionine synthase CmoA"/>
    <property type="match status" value="1"/>
</dbReference>
<dbReference type="NCBIfam" id="NF011995">
    <property type="entry name" value="PRK15451.1"/>
    <property type="match status" value="1"/>
</dbReference>
<dbReference type="PANTHER" id="PTHR43861:SF2">
    <property type="entry name" value="CARBOXY-S-ADENOSYL-L-METHIONINE SYNTHASE"/>
    <property type="match status" value="1"/>
</dbReference>
<dbReference type="PANTHER" id="PTHR43861">
    <property type="entry name" value="TRANS-ACONITATE 2-METHYLTRANSFERASE-RELATED"/>
    <property type="match status" value="1"/>
</dbReference>
<dbReference type="Pfam" id="PF13649">
    <property type="entry name" value="Methyltransf_25"/>
    <property type="match status" value="1"/>
</dbReference>
<dbReference type="PIRSF" id="PIRSF006325">
    <property type="entry name" value="MeTrfase_bac"/>
    <property type="match status" value="1"/>
</dbReference>
<dbReference type="SUPFAM" id="SSF53335">
    <property type="entry name" value="S-adenosyl-L-methionine-dependent methyltransferases"/>
    <property type="match status" value="1"/>
</dbReference>
<accession>Q322I9</accession>
<protein>
    <recommendedName>
        <fullName evidence="1">Carboxy-S-adenosyl-L-methionine synthase</fullName>
        <shortName evidence="1">Cx-SAM synthase</shortName>
        <ecNumber evidence="1">2.1.3.-</ecNumber>
    </recommendedName>
</protein>
<gene>
    <name evidence="1" type="primary">cmoA</name>
    <name type="ordered locus">SBO_1132</name>
</gene>
<keyword id="KW-0949">S-adenosyl-L-methionine</keyword>
<keyword id="KW-0808">Transferase</keyword>
<reference key="1">
    <citation type="journal article" date="2005" name="Nucleic Acids Res.">
        <title>Genome dynamics and diversity of Shigella species, the etiologic agents of bacillary dysentery.</title>
        <authorList>
            <person name="Yang F."/>
            <person name="Yang J."/>
            <person name="Zhang X."/>
            <person name="Chen L."/>
            <person name="Jiang Y."/>
            <person name="Yan Y."/>
            <person name="Tang X."/>
            <person name="Wang J."/>
            <person name="Xiong Z."/>
            <person name="Dong J."/>
            <person name="Xue Y."/>
            <person name="Zhu Y."/>
            <person name="Xu X."/>
            <person name="Sun L."/>
            <person name="Chen S."/>
            <person name="Nie H."/>
            <person name="Peng J."/>
            <person name="Xu J."/>
            <person name="Wang Y."/>
            <person name="Yuan Z."/>
            <person name="Wen Y."/>
            <person name="Yao Z."/>
            <person name="Shen Y."/>
            <person name="Qiang B."/>
            <person name="Hou Y."/>
            <person name="Yu J."/>
            <person name="Jin Q."/>
        </authorList>
    </citation>
    <scope>NUCLEOTIDE SEQUENCE [LARGE SCALE GENOMIC DNA]</scope>
    <source>
        <strain>Sb227</strain>
    </source>
</reference>